<organism>
    <name type="scientific">Buchnera aphidicola subsp. Cinara cedri (strain Cc)</name>
    <dbReference type="NCBI Taxonomy" id="372461"/>
    <lineage>
        <taxon>Bacteria</taxon>
        <taxon>Pseudomonadati</taxon>
        <taxon>Pseudomonadota</taxon>
        <taxon>Gammaproteobacteria</taxon>
        <taxon>Enterobacterales</taxon>
        <taxon>Erwiniaceae</taxon>
        <taxon>Buchnera</taxon>
    </lineage>
</organism>
<evidence type="ECO:0000255" key="1">
    <source>
        <dbReference type="HAMAP-Rule" id="MF_00382"/>
    </source>
</evidence>
<evidence type="ECO:0000305" key="2"/>
<sequence>MARVKRGVIAHARHKKVIKLAKGYYGARSRVYRVANQAVIKSGQYSYRDRRNKKRDFRKLWIIRINAAVKNYNLSYSKFIYGLKLSSININRKILSEIAIFDKISFKKLVDYSKNALSI</sequence>
<dbReference type="EMBL" id="CP000263">
    <property type="protein sequence ID" value="ABJ90558.1"/>
    <property type="molecule type" value="Genomic_DNA"/>
</dbReference>
<dbReference type="RefSeq" id="WP_011672477.1">
    <property type="nucleotide sequence ID" value="NC_008513.1"/>
</dbReference>
<dbReference type="SMR" id="Q057Z1"/>
<dbReference type="STRING" id="372461.BCc_081"/>
<dbReference type="KEGG" id="bcc:BCc_081"/>
<dbReference type="eggNOG" id="COG0292">
    <property type="taxonomic scope" value="Bacteria"/>
</dbReference>
<dbReference type="HOGENOM" id="CLU_123265_0_1_6"/>
<dbReference type="OrthoDB" id="9808966at2"/>
<dbReference type="Proteomes" id="UP000000669">
    <property type="component" value="Chromosome"/>
</dbReference>
<dbReference type="GO" id="GO:1990904">
    <property type="term" value="C:ribonucleoprotein complex"/>
    <property type="evidence" value="ECO:0007669"/>
    <property type="project" value="UniProtKB-KW"/>
</dbReference>
<dbReference type="GO" id="GO:0005840">
    <property type="term" value="C:ribosome"/>
    <property type="evidence" value="ECO:0007669"/>
    <property type="project" value="UniProtKB-KW"/>
</dbReference>
<dbReference type="GO" id="GO:0019843">
    <property type="term" value="F:rRNA binding"/>
    <property type="evidence" value="ECO:0007669"/>
    <property type="project" value="UniProtKB-UniRule"/>
</dbReference>
<dbReference type="GO" id="GO:0003735">
    <property type="term" value="F:structural constituent of ribosome"/>
    <property type="evidence" value="ECO:0007669"/>
    <property type="project" value="InterPro"/>
</dbReference>
<dbReference type="GO" id="GO:0000027">
    <property type="term" value="P:ribosomal large subunit assembly"/>
    <property type="evidence" value="ECO:0007669"/>
    <property type="project" value="UniProtKB-UniRule"/>
</dbReference>
<dbReference type="GO" id="GO:0006412">
    <property type="term" value="P:translation"/>
    <property type="evidence" value="ECO:0007669"/>
    <property type="project" value="InterPro"/>
</dbReference>
<dbReference type="CDD" id="cd07026">
    <property type="entry name" value="Ribosomal_L20"/>
    <property type="match status" value="1"/>
</dbReference>
<dbReference type="FunFam" id="1.10.1900.20:FF:000001">
    <property type="entry name" value="50S ribosomal protein L20"/>
    <property type="match status" value="1"/>
</dbReference>
<dbReference type="Gene3D" id="6.10.160.10">
    <property type="match status" value="1"/>
</dbReference>
<dbReference type="Gene3D" id="1.10.1900.20">
    <property type="entry name" value="Ribosomal protein L20"/>
    <property type="match status" value="1"/>
</dbReference>
<dbReference type="HAMAP" id="MF_00382">
    <property type="entry name" value="Ribosomal_bL20"/>
    <property type="match status" value="1"/>
</dbReference>
<dbReference type="InterPro" id="IPR005813">
    <property type="entry name" value="Ribosomal_bL20"/>
</dbReference>
<dbReference type="InterPro" id="IPR049946">
    <property type="entry name" value="RIBOSOMAL_L20_CS"/>
</dbReference>
<dbReference type="InterPro" id="IPR035566">
    <property type="entry name" value="Ribosomal_protein_bL20_C"/>
</dbReference>
<dbReference type="NCBIfam" id="TIGR01032">
    <property type="entry name" value="rplT_bact"/>
    <property type="match status" value="1"/>
</dbReference>
<dbReference type="PANTHER" id="PTHR10986">
    <property type="entry name" value="39S RIBOSOMAL PROTEIN L20"/>
    <property type="match status" value="1"/>
</dbReference>
<dbReference type="Pfam" id="PF00453">
    <property type="entry name" value="Ribosomal_L20"/>
    <property type="match status" value="1"/>
</dbReference>
<dbReference type="PRINTS" id="PR00062">
    <property type="entry name" value="RIBOSOMALL20"/>
</dbReference>
<dbReference type="SUPFAM" id="SSF74731">
    <property type="entry name" value="Ribosomal protein L20"/>
    <property type="match status" value="1"/>
</dbReference>
<dbReference type="PROSITE" id="PS00937">
    <property type="entry name" value="RIBOSOMAL_L20"/>
    <property type="match status" value="1"/>
</dbReference>
<gene>
    <name evidence="1" type="primary">rplT</name>
    <name type="ordered locus">BCc_081</name>
</gene>
<proteinExistence type="inferred from homology"/>
<keyword id="KW-1185">Reference proteome</keyword>
<keyword id="KW-0687">Ribonucleoprotein</keyword>
<keyword id="KW-0689">Ribosomal protein</keyword>
<keyword id="KW-0694">RNA-binding</keyword>
<keyword id="KW-0699">rRNA-binding</keyword>
<feature type="chain" id="PRO_1000048935" description="Large ribosomal subunit protein bL20">
    <location>
        <begin position="1"/>
        <end position="119"/>
    </location>
</feature>
<comment type="function">
    <text evidence="1">Binds directly to 23S ribosomal RNA and is necessary for the in vitro assembly process of the 50S ribosomal subunit. It is not involved in the protein synthesizing functions of that subunit.</text>
</comment>
<comment type="similarity">
    <text evidence="1">Belongs to the bacterial ribosomal protein bL20 family.</text>
</comment>
<reference key="1">
    <citation type="journal article" date="2006" name="Science">
        <title>A small microbial genome: the end of a long symbiotic relationship?</title>
        <authorList>
            <person name="Perez-Brocal V."/>
            <person name="Gil R."/>
            <person name="Ramos S."/>
            <person name="Lamelas A."/>
            <person name="Postigo M."/>
            <person name="Michelena J.M."/>
            <person name="Silva F.J."/>
            <person name="Moya A."/>
            <person name="Latorre A."/>
        </authorList>
    </citation>
    <scope>NUCLEOTIDE SEQUENCE [LARGE SCALE GENOMIC DNA]</scope>
    <source>
        <strain>Cc</strain>
    </source>
</reference>
<accession>Q057Z1</accession>
<protein>
    <recommendedName>
        <fullName evidence="1">Large ribosomal subunit protein bL20</fullName>
    </recommendedName>
    <alternativeName>
        <fullName evidence="2">50S ribosomal protein L20</fullName>
    </alternativeName>
</protein>
<name>RL20_BUCCC</name>